<protein>
    <recommendedName>
        <fullName>Prolyl-tRNA synthetase associated domain-containing protein 1</fullName>
    </recommendedName>
    <alternativeName>
        <fullName>PrdX deacylase domain-containing protein 1</fullName>
    </alternativeName>
</protein>
<feature type="chain" id="PRO_0000329285" description="Prolyl-tRNA synthetase associated domain-containing protein 1">
    <location>
        <begin position="1"/>
        <end position="171"/>
    </location>
</feature>
<keyword id="KW-1185">Reference proteome</keyword>
<organism>
    <name type="scientific">Bos taurus</name>
    <name type="common">Bovine</name>
    <dbReference type="NCBI Taxonomy" id="9913"/>
    <lineage>
        <taxon>Eukaryota</taxon>
        <taxon>Metazoa</taxon>
        <taxon>Chordata</taxon>
        <taxon>Craniata</taxon>
        <taxon>Vertebrata</taxon>
        <taxon>Euteleostomi</taxon>
        <taxon>Mammalia</taxon>
        <taxon>Eutheria</taxon>
        <taxon>Laurasiatheria</taxon>
        <taxon>Artiodactyla</taxon>
        <taxon>Ruminantia</taxon>
        <taxon>Pecora</taxon>
        <taxon>Bovidae</taxon>
        <taxon>Bovinae</taxon>
        <taxon>Bos</taxon>
    </lineage>
</organism>
<name>PRXD1_BOVIN</name>
<dbReference type="EMBL" id="BC126803">
    <property type="protein sequence ID" value="AAI26804.1"/>
    <property type="molecule type" value="mRNA"/>
</dbReference>
<dbReference type="RefSeq" id="NP_001073758.1">
    <property type="nucleotide sequence ID" value="NM_001080289.2"/>
</dbReference>
<dbReference type="SMR" id="A1A4Q2"/>
<dbReference type="FunCoup" id="A1A4Q2">
    <property type="interactions" value="519"/>
</dbReference>
<dbReference type="PaxDb" id="9913-ENSBTAP00000023208"/>
<dbReference type="GeneID" id="526913"/>
<dbReference type="KEGG" id="bta:526913"/>
<dbReference type="CTD" id="67939"/>
<dbReference type="eggNOG" id="ENOG502QT6S">
    <property type="taxonomic scope" value="Eukaryota"/>
</dbReference>
<dbReference type="HOGENOM" id="CLU_104635_2_1_1"/>
<dbReference type="InParanoid" id="A1A4Q2"/>
<dbReference type="OrthoDB" id="424586at2759"/>
<dbReference type="TreeFam" id="TF329697"/>
<dbReference type="Proteomes" id="UP000009136">
    <property type="component" value="Unplaced"/>
</dbReference>
<dbReference type="GO" id="GO:0002161">
    <property type="term" value="F:aminoacyl-tRNA deacylase activity"/>
    <property type="evidence" value="ECO:0007669"/>
    <property type="project" value="InterPro"/>
</dbReference>
<dbReference type="CDD" id="cd04335">
    <property type="entry name" value="PrdX_deacylase"/>
    <property type="match status" value="1"/>
</dbReference>
<dbReference type="FunFam" id="3.90.960.10:FF:000005">
    <property type="entry name" value="Putative prolyl-tRNA synthetase"/>
    <property type="match status" value="1"/>
</dbReference>
<dbReference type="Gene3D" id="3.90.960.10">
    <property type="entry name" value="YbaK/aminoacyl-tRNA synthetase-associated domain"/>
    <property type="match status" value="1"/>
</dbReference>
<dbReference type="InterPro" id="IPR040285">
    <property type="entry name" value="ProX/PRXD1"/>
</dbReference>
<dbReference type="InterPro" id="IPR036754">
    <property type="entry name" value="YbaK/aa-tRNA-synt-asso_dom_sf"/>
</dbReference>
<dbReference type="InterPro" id="IPR007214">
    <property type="entry name" value="YbaK/aa-tRNA-synth-assoc-dom"/>
</dbReference>
<dbReference type="PANTHER" id="PTHR31423:SF3">
    <property type="entry name" value="PROLYL-TRNA SYNTHETASE ASSOCIATED DOMAIN-CONTAINING PROTEIN 1-RELATED"/>
    <property type="match status" value="1"/>
</dbReference>
<dbReference type="PANTHER" id="PTHR31423">
    <property type="entry name" value="YBAK DOMAIN-CONTAINING PROTEIN"/>
    <property type="match status" value="1"/>
</dbReference>
<dbReference type="Pfam" id="PF04073">
    <property type="entry name" value="tRNA_edit"/>
    <property type="match status" value="1"/>
</dbReference>
<dbReference type="SUPFAM" id="SSF55826">
    <property type="entry name" value="YbaK/ProRS associated domain"/>
    <property type="match status" value="1"/>
</dbReference>
<gene>
    <name type="primary">PRORSD1</name>
    <name type="synonym">PRDXDD1</name>
</gene>
<reference key="1">
    <citation type="submission" date="2006-10" db="EMBL/GenBank/DDBJ databases">
        <authorList>
            <consortium name="NIH - Mammalian Gene Collection (MGC) project"/>
        </authorList>
    </citation>
    <scope>NUCLEOTIDE SEQUENCE [LARGE SCALE MRNA]</scope>
    <source>
        <strain>Hereford</strain>
        <tissue>Fetal lung</tissue>
    </source>
</reference>
<sequence>MAGAELRAALEQRLAALAIRTEVVEHPEVFTVEEMMPHIQHLKGAHSKNLFLKDKKKKGYWLVTVLHDRQINLNDLAKQLGVGSGNLRFADEAAMLEKLKVGQGCATPLALFCDDGDVKFVLDSAFLEGGHEKVYFHPMTNAATMGLSPEDFLTFVKNTGHDPIILNFDKN</sequence>
<accession>A1A4Q2</accession>
<proteinExistence type="evidence at transcript level"/>
<comment type="similarity">
    <text evidence="1">Belongs to the PRORSD1 family.</text>
</comment>
<evidence type="ECO:0000305" key="1"/>